<dbReference type="EC" id="3.1.3.5" evidence="1"/>
<dbReference type="EMBL" id="CP001034">
    <property type="protein sequence ID" value="ACB85172.1"/>
    <property type="molecule type" value="Genomic_DNA"/>
</dbReference>
<dbReference type="RefSeq" id="WP_012448041.1">
    <property type="nucleotide sequence ID" value="NC_010718.1"/>
</dbReference>
<dbReference type="SMR" id="B2A4J5"/>
<dbReference type="STRING" id="457570.Nther_1598"/>
<dbReference type="KEGG" id="nth:Nther_1598"/>
<dbReference type="eggNOG" id="COG0496">
    <property type="taxonomic scope" value="Bacteria"/>
</dbReference>
<dbReference type="HOGENOM" id="CLU_045192_1_3_9"/>
<dbReference type="InParanoid" id="B2A4J5"/>
<dbReference type="OrthoDB" id="9780815at2"/>
<dbReference type="Proteomes" id="UP000001683">
    <property type="component" value="Chromosome"/>
</dbReference>
<dbReference type="GO" id="GO:0005737">
    <property type="term" value="C:cytoplasm"/>
    <property type="evidence" value="ECO:0007669"/>
    <property type="project" value="UniProtKB-SubCell"/>
</dbReference>
<dbReference type="GO" id="GO:0008254">
    <property type="term" value="F:3'-nucleotidase activity"/>
    <property type="evidence" value="ECO:0007669"/>
    <property type="project" value="TreeGrafter"/>
</dbReference>
<dbReference type="GO" id="GO:0008253">
    <property type="term" value="F:5'-nucleotidase activity"/>
    <property type="evidence" value="ECO:0007669"/>
    <property type="project" value="UniProtKB-UniRule"/>
</dbReference>
<dbReference type="GO" id="GO:0004309">
    <property type="term" value="F:exopolyphosphatase activity"/>
    <property type="evidence" value="ECO:0007669"/>
    <property type="project" value="TreeGrafter"/>
</dbReference>
<dbReference type="GO" id="GO:0046872">
    <property type="term" value="F:metal ion binding"/>
    <property type="evidence" value="ECO:0007669"/>
    <property type="project" value="UniProtKB-UniRule"/>
</dbReference>
<dbReference type="GO" id="GO:0000166">
    <property type="term" value="F:nucleotide binding"/>
    <property type="evidence" value="ECO:0007669"/>
    <property type="project" value="UniProtKB-KW"/>
</dbReference>
<dbReference type="FunFam" id="3.40.1210.10:FF:000001">
    <property type="entry name" value="5'/3'-nucleotidase SurE"/>
    <property type="match status" value="1"/>
</dbReference>
<dbReference type="Gene3D" id="3.40.1210.10">
    <property type="entry name" value="Survival protein SurE-like phosphatase/nucleotidase"/>
    <property type="match status" value="1"/>
</dbReference>
<dbReference type="HAMAP" id="MF_00060">
    <property type="entry name" value="SurE"/>
    <property type="match status" value="1"/>
</dbReference>
<dbReference type="InterPro" id="IPR030048">
    <property type="entry name" value="SurE"/>
</dbReference>
<dbReference type="InterPro" id="IPR002828">
    <property type="entry name" value="SurE-like_Pase/nucleotidase"/>
</dbReference>
<dbReference type="InterPro" id="IPR036523">
    <property type="entry name" value="SurE-like_sf"/>
</dbReference>
<dbReference type="NCBIfam" id="NF001490">
    <property type="entry name" value="PRK00346.1-4"/>
    <property type="match status" value="1"/>
</dbReference>
<dbReference type="NCBIfam" id="NF001492">
    <property type="entry name" value="PRK00346.2-2"/>
    <property type="match status" value="1"/>
</dbReference>
<dbReference type="NCBIfam" id="TIGR00087">
    <property type="entry name" value="surE"/>
    <property type="match status" value="1"/>
</dbReference>
<dbReference type="PANTHER" id="PTHR30457">
    <property type="entry name" value="5'-NUCLEOTIDASE SURE"/>
    <property type="match status" value="1"/>
</dbReference>
<dbReference type="PANTHER" id="PTHR30457:SF12">
    <property type="entry name" value="5'_3'-NUCLEOTIDASE SURE"/>
    <property type="match status" value="1"/>
</dbReference>
<dbReference type="Pfam" id="PF01975">
    <property type="entry name" value="SurE"/>
    <property type="match status" value="1"/>
</dbReference>
<dbReference type="SUPFAM" id="SSF64167">
    <property type="entry name" value="SurE-like"/>
    <property type="match status" value="1"/>
</dbReference>
<gene>
    <name evidence="1" type="primary">surE</name>
    <name type="ordered locus">Nther_1598</name>
</gene>
<organism>
    <name type="scientific">Natranaerobius thermophilus (strain ATCC BAA-1301 / DSM 18059 / JW/NM-WN-LF)</name>
    <dbReference type="NCBI Taxonomy" id="457570"/>
    <lineage>
        <taxon>Bacteria</taxon>
        <taxon>Bacillati</taxon>
        <taxon>Bacillota</taxon>
        <taxon>Clostridia</taxon>
        <taxon>Natranaerobiales</taxon>
        <taxon>Natranaerobiaceae</taxon>
        <taxon>Natranaerobius</taxon>
    </lineage>
</organism>
<accession>B2A4J5</accession>
<sequence length="259" mass="28723">MKVLLTNDDGIYAPGIFAMAKEIASRDEFEAVVVAPDREQSATGHAITVHKPLRVNNVKKLGEKLEIPFYSVNGTPSDCVKLAVESVMDEKPDLVISGINRGANLGTDVLYSGTVSGAMEAAILNIKSIAVSLVDYDYEDYSTAASYTAYIANIIKDNPEEFENGTLLNVNVPAVEANQLKGVKITRQGFRQYENIFEKRFDPRGKAYYWMAGKVIEDTSDIKTDVASVKENYVSVTPIKYDLTDYNLYNSLSNWEFDD</sequence>
<protein>
    <recommendedName>
        <fullName evidence="1">5'-nucleotidase SurE</fullName>
        <ecNumber evidence="1">3.1.3.5</ecNumber>
    </recommendedName>
    <alternativeName>
        <fullName evidence="1">Nucleoside 5'-monophosphate phosphohydrolase</fullName>
    </alternativeName>
</protein>
<keyword id="KW-0963">Cytoplasm</keyword>
<keyword id="KW-0378">Hydrolase</keyword>
<keyword id="KW-0479">Metal-binding</keyword>
<keyword id="KW-0547">Nucleotide-binding</keyword>
<keyword id="KW-1185">Reference proteome</keyword>
<proteinExistence type="inferred from homology"/>
<comment type="function">
    <text evidence="1">Nucleotidase that shows phosphatase activity on nucleoside 5'-monophosphates.</text>
</comment>
<comment type="catalytic activity">
    <reaction evidence="1">
        <text>a ribonucleoside 5'-phosphate + H2O = a ribonucleoside + phosphate</text>
        <dbReference type="Rhea" id="RHEA:12484"/>
        <dbReference type="ChEBI" id="CHEBI:15377"/>
        <dbReference type="ChEBI" id="CHEBI:18254"/>
        <dbReference type="ChEBI" id="CHEBI:43474"/>
        <dbReference type="ChEBI" id="CHEBI:58043"/>
        <dbReference type="EC" id="3.1.3.5"/>
    </reaction>
</comment>
<comment type="cofactor">
    <cofactor evidence="1">
        <name>a divalent metal cation</name>
        <dbReference type="ChEBI" id="CHEBI:60240"/>
    </cofactor>
    <text evidence="1">Binds 1 divalent metal cation per subunit.</text>
</comment>
<comment type="subcellular location">
    <subcellularLocation>
        <location evidence="1">Cytoplasm</location>
    </subcellularLocation>
</comment>
<comment type="similarity">
    <text evidence="1">Belongs to the SurE nucleotidase family.</text>
</comment>
<name>SURE_NATTJ</name>
<feature type="chain" id="PRO_1000196611" description="5'-nucleotidase SurE">
    <location>
        <begin position="1"/>
        <end position="259"/>
    </location>
</feature>
<feature type="binding site" evidence="1">
    <location>
        <position position="8"/>
    </location>
    <ligand>
        <name>a divalent metal cation</name>
        <dbReference type="ChEBI" id="CHEBI:60240"/>
    </ligand>
</feature>
<feature type="binding site" evidence="1">
    <location>
        <position position="9"/>
    </location>
    <ligand>
        <name>a divalent metal cation</name>
        <dbReference type="ChEBI" id="CHEBI:60240"/>
    </ligand>
</feature>
<feature type="binding site" evidence="1">
    <location>
        <position position="41"/>
    </location>
    <ligand>
        <name>a divalent metal cation</name>
        <dbReference type="ChEBI" id="CHEBI:60240"/>
    </ligand>
</feature>
<feature type="binding site" evidence="1">
    <location>
        <position position="100"/>
    </location>
    <ligand>
        <name>a divalent metal cation</name>
        <dbReference type="ChEBI" id="CHEBI:60240"/>
    </ligand>
</feature>
<reference key="1">
    <citation type="submission" date="2008-04" db="EMBL/GenBank/DDBJ databases">
        <title>Complete sequence of chromosome of Natranaerobius thermophilus JW/NM-WN-LF.</title>
        <authorList>
            <consortium name="US DOE Joint Genome Institute"/>
            <person name="Copeland A."/>
            <person name="Lucas S."/>
            <person name="Lapidus A."/>
            <person name="Glavina del Rio T."/>
            <person name="Dalin E."/>
            <person name="Tice H."/>
            <person name="Bruce D."/>
            <person name="Goodwin L."/>
            <person name="Pitluck S."/>
            <person name="Chertkov O."/>
            <person name="Brettin T."/>
            <person name="Detter J.C."/>
            <person name="Han C."/>
            <person name="Kuske C.R."/>
            <person name="Schmutz J."/>
            <person name="Larimer F."/>
            <person name="Land M."/>
            <person name="Hauser L."/>
            <person name="Kyrpides N."/>
            <person name="Lykidis A."/>
            <person name="Mesbah N.M."/>
            <person name="Wiegel J."/>
        </authorList>
    </citation>
    <scope>NUCLEOTIDE SEQUENCE [LARGE SCALE GENOMIC DNA]</scope>
    <source>
        <strain>ATCC BAA-1301 / DSM 18059 / JW/NM-WN-LF</strain>
    </source>
</reference>
<evidence type="ECO:0000255" key="1">
    <source>
        <dbReference type="HAMAP-Rule" id="MF_00060"/>
    </source>
</evidence>